<feature type="chain" id="PRO_0000184555" description="Purine nucleoside phosphorylase 2">
    <location>
        <begin position="1"/>
        <end position="277"/>
    </location>
</feature>
<feature type="binding site" evidence="2 9">
    <location>
        <position position="65"/>
    </location>
    <ligand>
        <name>phosphate</name>
        <dbReference type="ChEBI" id="CHEBI:43474"/>
    </ligand>
</feature>
<feature type="binding site" evidence="2 9 10">
    <location>
        <begin position="85"/>
        <end position="87"/>
    </location>
    <ligand>
        <name>phosphate</name>
        <dbReference type="ChEBI" id="CHEBI:43474"/>
    </ligand>
</feature>
<feature type="binding site" evidence="2 9 10">
    <location>
        <position position="117"/>
    </location>
    <ligand>
        <name>phosphate</name>
        <dbReference type="ChEBI" id="CHEBI:43474"/>
    </ligand>
</feature>
<feature type="binding site" evidence="2">
    <location>
        <position position="197"/>
    </location>
    <ligand>
        <name>a purine D-ribonucleoside</name>
        <dbReference type="ChEBI" id="CHEBI:142355"/>
    </ligand>
</feature>
<feature type="binding site" evidence="2 9 10">
    <location>
        <position position="216"/>
    </location>
    <ligand>
        <name>phosphate</name>
        <dbReference type="ChEBI" id="CHEBI:43474"/>
    </ligand>
</feature>
<feature type="binding site" evidence="2">
    <location>
        <position position="239"/>
    </location>
    <ligand>
        <name>a purine D-ribonucleoside</name>
        <dbReference type="ChEBI" id="CHEBI:142355"/>
    </ligand>
</feature>
<feature type="mutagenesis site" description="No detectable activity with xanthosine as substrate, but largely retains its activity against other substrates, namely inosine and guanosine, although with altered affinities, higher and lower respectively, and clearly reduced maximal velocities for both." evidence="2">
    <original>Y</original>
    <variation>L</variation>
    <location>
        <position position="191"/>
    </location>
</feature>
<feature type="mutagenesis site" description="Catalyzes the phosphorolysis of adenosine with moderate efficiency, and essentially has lost all activity against the 6-oxo-purine substrates xanthosine, inosine and guanosine." evidence="2">
    <original>N</original>
    <variation>D</variation>
    <location>
        <position position="239"/>
    </location>
</feature>
<feature type="sequence conflict" description="In Ref. 1; CAA52049." evidence="8" ref="1">
    <original>P</original>
    <variation>A</variation>
    <location>
        <position position="144"/>
    </location>
</feature>
<feature type="sequence conflict" description="In Ref. 1; CAA52049." evidence="8" ref="1">
    <original>S</original>
    <variation>H</variation>
    <location>
        <position position="261"/>
    </location>
</feature>
<feature type="sequence conflict" description="In Ref. 1; CAA52049." evidence="8" ref="1">
    <original>F</original>
    <variation>L</variation>
    <location>
        <position position="265"/>
    </location>
</feature>
<feature type="helix" evidence="11">
    <location>
        <begin position="9"/>
        <end position="20"/>
    </location>
</feature>
<feature type="strand" evidence="11">
    <location>
        <begin position="27"/>
        <end position="32"/>
    </location>
</feature>
<feature type="helix" evidence="11">
    <location>
        <begin position="36"/>
        <end position="42"/>
    </location>
</feature>
<feature type="strand" evidence="11">
    <location>
        <begin position="44"/>
        <end position="50"/>
    </location>
</feature>
<feature type="helix" evidence="11">
    <location>
        <begin position="51"/>
        <end position="53"/>
    </location>
</feature>
<feature type="strand" evidence="11">
    <location>
        <begin position="68"/>
        <end position="74"/>
    </location>
</feature>
<feature type="strand" evidence="11">
    <location>
        <begin position="77"/>
        <end position="84"/>
    </location>
</feature>
<feature type="helix" evidence="11">
    <location>
        <begin position="88"/>
        <end position="90"/>
    </location>
</feature>
<feature type="turn" evidence="11">
    <location>
        <begin position="94"/>
        <end position="97"/>
    </location>
</feature>
<feature type="helix" evidence="11">
    <location>
        <begin position="98"/>
        <end position="107"/>
    </location>
</feature>
<feature type="strand" evidence="11">
    <location>
        <begin position="110"/>
        <end position="121"/>
    </location>
</feature>
<feature type="strand" evidence="11">
    <location>
        <begin position="130"/>
        <end position="137"/>
    </location>
</feature>
<feature type="strand" evidence="11">
    <location>
        <begin position="140"/>
        <end position="142"/>
    </location>
</feature>
<feature type="turn" evidence="11">
    <location>
        <begin position="151"/>
        <end position="153"/>
    </location>
</feature>
<feature type="strand" evidence="11">
    <location>
        <begin position="156"/>
        <end position="158"/>
    </location>
</feature>
<feature type="helix" evidence="11">
    <location>
        <begin position="166"/>
        <end position="177"/>
    </location>
</feature>
<feature type="turn" evidence="11">
    <location>
        <begin position="178"/>
        <end position="180"/>
    </location>
</feature>
<feature type="strand" evidence="11">
    <location>
        <begin position="183"/>
        <end position="190"/>
    </location>
</feature>
<feature type="helix" evidence="11">
    <location>
        <begin position="199"/>
        <end position="207"/>
    </location>
</feature>
<feature type="strand" evidence="11">
    <location>
        <begin position="211"/>
        <end position="217"/>
    </location>
</feature>
<feature type="helix" evidence="11">
    <location>
        <begin position="218"/>
        <end position="226"/>
    </location>
</feature>
<feature type="strand" evidence="11">
    <location>
        <begin position="230"/>
        <end position="240"/>
    </location>
</feature>
<feature type="strand" evidence="11">
    <location>
        <begin position="244"/>
        <end position="246"/>
    </location>
</feature>
<feature type="helix" evidence="11">
    <location>
        <begin position="251"/>
        <end position="256"/>
    </location>
</feature>
<feature type="helix" evidence="11">
    <location>
        <begin position="257"/>
        <end position="259"/>
    </location>
</feature>
<feature type="helix" evidence="11">
    <location>
        <begin position="262"/>
        <end position="276"/>
    </location>
</feature>
<gene>
    <name type="primary">xapA</name>
    <name type="synonym">pndA</name>
    <name type="ordered locus">b2407</name>
    <name type="ordered locus">JW2398</name>
</gene>
<proteinExistence type="evidence at protein level"/>
<dbReference type="EC" id="2.4.2.1" evidence="1 2 3 4 6 7"/>
<dbReference type="EMBL" id="X73828">
    <property type="protein sequence ID" value="CAA52049.1"/>
    <property type="status" value="ALT_FRAME"/>
    <property type="molecule type" value="Genomic_DNA"/>
</dbReference>
<dbReference type="EMBL" id="U00096">
    <property type="protein sequence ID" value="AAC75460.1"/>
    <property type="molecule type" value="Genomic_DNA"/>
</dbReference>
<dbReference type="EMBL" id="AP009048">
    <property type="protein sequence ID" value="BAA16275.1"/>
    <property type="molecule type" value="Genomic_DNA"/>
</dbReference>
<dbReference type="PIR" id="F65014">
    <property type="entry name" value="F65014"/>
</dbReference>
<dbReference type="RefSeq" id="NP_416902.1">
    <property type="nucleotide sequence ID" value="NC_000913.3"/>
</dbReference>
<dbReference type="RefSeq" id="WP_000084573.1">
    <property type="nucleotide sequence ID" value="NZ_STEB01000039.1"/>
</dbReference>
<dbReference type="PDB" id="1YQQ">
    <property type="method" value="X-ray"/>
    <property type="resolution" value="2.60 A"/>
    <property type="chains" value="A/B/C=1-277"/>
</dbReference>
<dbReference type="PDB" id="1YQU">
    <property type="method" value="X-ray"/>
    <property type="resolution" value="3.10 A"/>
    <property type="chains" value="A/B/C=1-277"/>
</dbReference>
<dbReference type="PDB" id="1YR3">
    <property type="method" value="X-ray"/>
    <property type="resolution" value="3.20 A"/>
    <property type="chains" value="A/B/C/D/E/F=1-277"/>
</dbReference>
<dbReference type="PDBsum" id="1YQQ"/>
<dbReference type="PDBsum" id="1YQU"/>
<dbReference type="PDBsum" id="1YR3"/>
<dbReference type="SMR" id="P45563"/>
<dbReference type="BioGRID" id="4260565">
    <property type="interactions" value="23"/>
</dbReference>
<dbReference type="FunCoup" id="P45563">
    <property type="interactions" value="942"/>
</dbReference>
<dbReference type="IntAct" id="P45563">
    <property type="interactions" value="4"/>
</dbReference>
<dbReference type="STRING" id="511145.b2407"/>
<dbReference type="DrugBank" id="DB02377">
    <property type="generic name" value="Guanine"/>
</dbReference>
<dbReference type="DrugBank" id="DB02134">
    <property type="generic name" value="Xanthine"/>
</dbReference>
<dbReference type="PaxDb" id="511145-b2407"/>
<dbReference type="EnsemblBacteria" id="AAC75460">
    <property type="protein sequence ID" value="AAC75460"/>
    <property type="gene ID" value="b2407"/>
</dbReference>
<dbReference type="GeneID" id="946878"/>
<dbReference type="KEGG" id="ecj:JW2398"/>
<dbReference type="KEGG" id="eco:b2407"/>
<dbReference type="KEGG" id="ecoc:C3026_13380"/>
<dbReference type="PATRIC" id="fig|1411691.4.peg.4325"/>
<dbReference type="EchoBASE" id="EB4152"/>
<dbReference type="eggNOG" id="COG0005">
    <property type="taxonomic scope" value="Bacteria"/>
</dbReference>
<dbReference type="HOGENOM" id="CLU_054456_1_0_6"/>
<dbReference type="InParanoid" id="P45563"/>
<dbReference type="OMA" id="EGVYAQF"/>
<dbReference type="OrthoDB" id="1523230at2"/>
<dbReference type="PhylomeDB" id="P45563"/>
<dbReference type="BioCyc" id="EcoCyc:XANTHOSINEPHOSPHORY-MONOMER"/>
<dbReference type="BioCyc" id="MetaCyc:XANTHOSINEPHOSPHORY-MONOMER"/>
<dbReference type="BRENDA" id="2.4.2.1">
    <property type="organism ID" value="2026"/>
</dbReference>
<dbReference type="UniPathway" id="UPA00119"/>
<dbReference type="UniPathway" id="UPA00606"/>
<dbReference type="EvolutionaryTrace" id="P45563"/>
<dbReference type="PRO" id="PR:P45563"/>
<dbReference type="Proteomes" id="UP000000625">
    <property type="component" value="Chromosome"/>
</dbReference>
<dbReference type="GO" id="GO:0005737">
    <property type="term" value="C:cytoplasm"/>
    <property type="evidence" value="ECO:0000314"/>
    <property type="project" value="EcoliWiki"/>
</dbReference>
<dbReference type="GO" id="GO:0047975">
    <property type="term" value="F:guanosine phosphorylase activity"/>
    <property type="evidence" value="ECO:0000314"/>
    <property type="project" value="UniProtKB"/>
</dbReference>
<dbReference type="GO" id="GO:0042802">
    <property type="term" value="F:identical protein binding"/>
    <property type="evidence" value="ECO:0000314"/>
    <property type="project" value="EcoCyc"/>
</dbReference>
<dbReference type="GO" id="GO:0047724">
    <property type="term" value="F:inosine nucleosidase activity"/>
    <property type="evidence" value="ECO:0000314"/>
    <property type="project" value="UniProtKB"/>
</dbReference>
<dbReference type="GO" id="GO:0004731">
    <property type="term" value="F:purine-nucleoside phosphorylase activity"/>
    <property type="evidence" value="ECO:0000314"/>
    <property type="project" value="UniProtKB"/>
</dbReference>
<dbReference type="GO" id="GO:0006161">
    <property type="term" value="P:deoxyguanosine catabolic process"/>
    <property type="evidence" value="ECO:0000314"/>
    <property type="project" value="UniProtKB"/>
</dbReference>
<dbReference type="GO" id="GO:0006149">
    <property type="term" value="P:deoxyinosine catabolic process"/>
    <property type="evidence" value="ECO:0000314"/>
    <property type="project" value="UniProtKB"/>
</dbReference>
<dbReference type="GO" id="GO:0046115">
    <property type="term" value="P:guanosine catabolic process"/>
    <property type="evidence" value="ECO:0000314"/>
    <property type="project" value="UniProtKB"/>
</dbReference>
<dbReference type="GO" id="GO:0006148">
    <property type="term" value="P:inosine catabolic process"/>
    <property type="evidence" value="ECO:0000314"/>
    <property type="project" value="UniProtKB"/>
</dbReference>
<dbReference type="GO" id="GO:0034355">
    <property type="term" value="P:NAD biosynthetic process via the salvage pathway"/>
    <property type="evidence" value="ECO:0000269"/>
    <property type="project" value="EcoCyc"/>
</dbReference>
<dbReference type="GO" id="GO:0015949">
    <property type="term" value="P:nucleobase-containing small molecule interconversion"/>
    <property type="evidence" value="ECO:0000315"/>
    <property type="project" value="EcoliWiki"/>
</dbReference>
<dbReference type="GO" id="GO:0055086">
    <property type="term" value="P:nucleobase-containing small molecule metabolic process"/>
    <property type="evidence" value="ECO:0000315"/>
    <property type="project" value="EcoliWiki"/>
</dbReference>
<dbReference type="GO" id="GO:0034214">
    <property type="term" value="P:protein hexamerization"/>
    <property type="evidence" value="ECO:0000314"/>
    <property type="project" value="UniProtKB"/>
</dbReference>
<dbReference type="GO" id="GO:0006152">
    <property type="term" value="P:purine nucleoside catabolic process"/>
    <property type="evidence" value="ECO:0000314"/>
    <property type="project" value="UniProtKB"/>
</dbReference>
<dbReference type="GO" id="GO:1903228">
    <property type="term" value="P:xanthosine catabolic process"/>
    <property type="evidence" value="ECO:0000315"/>
    <property type="project" value="EcoCyc"/>
</dbReference>
<dbReference type="CDD" id="cd09009">
    <property type="entry name" value="PNP-EcPNPII_like"/>
    <property type="match status" value="1"/>
</dbReference>
<dbReference type="FunFam" id="3.40.50.1580:FF:000011">
    <property type="entry name" value="Purine nucleoside phosphorylase"/>
    <property type="match status" value="1"/>
</dbReference>
<dbReference type="Gene3D" id="3.40.50.1580">
    <property type="entry name" value="Nucleoside phosphorylase domain"/>
    <property type="match status" value="1"/>
</dbReference>
<dbReference type="InterPro" id="IPR000845">
    <property type="entry name" value="Nucleoside_phosphorylase_d"/>
</dbReference>
<dbReference type="InterPro" id="IPR035994">
    <property type="entry name" value="Nucleoside_phosphorylase_sf"/>
</dbReference>
<dbReference type="InterPro" id="IPR011268">
    <property type="entry name" value="Purine_phosphorylase"/>
</dbReference>
<dbReference type="InterPro" id="IPR018099">
    <property type="entry name" value="Purine_phosphorylase-2_CS"/>
</dbReference>
<dbReference type="InterPro" id="IPR010943">
    <property type="entry name" value="Xanthosine_phosphorylase"/>
</dbReference>
<dbReference type="NCBIfam" id="TIGR01697">
    <property type="entry name" value="PNPH-PUNA-XAPA"/>
    <property type="match status" value="1"/>
</dbReference>
<dbReference type="NCBIfam" id="NF006054">
    <property type="entry name" value="PRK08202.1"/>
    <property type="match status" value="1"/>
</dbReference>
<dbReference type="NCBIfam" id="TIGR01699">
    <property type="entry name" value="XAPA"/>
    <property type="match status" value="1"/>
</dbReference>
<dbReference type="PANTHER" id="PTHR11904">
    <property type="entry name" value="METHYLTHIOADENOSINE/PURINE NUCLEOSIDE PHOSPHORYLASE"/>
    <property type="match status" value="1"/>
</dbReference>
<dbReference type="PANTHER" id="PTHR11904:SF9">
    <property type="entry name" value="PURINE NUCLEOSIDE PHOSPHORYLASE-RELATED"/>
    <property type="match status" value="1"/>
</dbReference>
<dbReference type="Pfam" id="PF01048">
    <property type="entry name" value="PNP_UDP_1"/>
    <property type="match status" value="1"/>
</dbReference>
<dbReference type="PIRSF" id="PIRSF000477">
    <property type="entry name" value="PurNPase"/>
    <property type="match status" value="1"/>
</dbReference>
<dbReference type="SUPFAM" id="SSF53167">
    <property type="entry name" value="Purine and uridine phosphorylases"/>
    <property type="match status" value="1"/>
</dbReference>
<dbReference type="PROSITE" id="PS01240">
    <property type="entry name" value="PNP_MTAP_2"/>
    <property type="match status" value="1"/>
</dbReference>
<name>XAPA_ECOLI</name>
<comment type="function">
    <text evidence="2 4 5 6">The purine nucleoside phosphorylases catalyze the phosphorolytic breakdown of the N-glycosidic bond in the beta-(deoxy)ribonucleoside molecules, with the formation of the corresponding free purine bases and pentose-1-phosphate. This protein can degrade all purine nucleosides including xanthosine, inosine and guanosine, but cannot cleave adenosine, deoxyadenosine or hypoxanthine arabinoside. Has a preference for the neutral over the monoanionic form of xanthosine.</text>
</comment>
<comment type="catalytic activity">
    <reaction evidence="1 2 3 4 6 7">
        <text>a purine D-ribonucleoside + phosphate = a purine nucleobase + alpha-D-ribose 1-phosphate</text>
        <dbReference type="Rhea" id="RHEA:19805"/>
        <dbReference type="ChEBI" id="CHEBI:26386"/>
        <dbReference type="ChEBI" id="CHEBI:43474"/>
        <dbReference type="ChEBI" id="CHEBI:57720"/>
        <dbReference type="ChEBI" id="CHEBI:142355"/>
        <dbReference type="EC" id="2.4.2.1"/>
    </reaction>
</comment>
<comment type="activity regulation">
    <text evidence="4">Rapidly inactivated by p-chloromercuriphenylsulfonic acid (p-CMB). Dithiothreitol incubation restores the activity.</text>
</comment>
<comment type="biophysicochemical properties">
    <kinetics>
        <KM evidence="4">51 uM for xanthosine (at pH 7.0)</KM>
        <KM evidence="2">72 uM for xanthosine (at 25 degrees Celsius and pH 7.1)</KM>
        <KM evidence="4">110 uM for guanosine (at pH 7.0)</KM>
        <KM evidence="2">155 uM for guanosine (at 25 degrees Celsius and pH 7.1)</KM>
        <KM evidence="2">963 uM for inosine (at 25 degrees Celsius and pH 7.1)</KM>
        <KM evidence="4">340 uM for inosine (at 25 degrees Celsius and pH 7.0)</KM>
        <KM evidence="4">62 uM for 2'-deoxyinosine (at 25 degrees Celsius and pH 7.0)</KM>
        <KM evidence="4">600 uM for 5'-deoxyinosine (at 25 degrees Celsius and pH 7.0)</KM>
        <KM evidence="4">2600 uM for 2',3'-dideoxyinosine (at 25 degrees Celsius and pH 7.0)</KM>
        <KM evidence="4">44 uM for 2'-deoxyguanosine (at 25 degrees Celsius and pH 7.0)</KM>
        <KM evidence="4">3.3 uM for hypoxanthine (at 25 degrees Celsius and pH 7.0)</KM>
        <KM evidence="4">4.1 uM for guanine (at 25 degrees Celsius and pH 7.0)</KM>
        <KM evidence="4">760 uM for phosphate (at 25 degrees Celsius and pH 7.0)</KM>
        <KM evidence="4">59 uM for alpha-D-ribose 1-phosphate (at 25 degrees Celsius and pH 7.0)</KM>
        <KM evidence="4">58 uM for alpha-D-2'-deoxyribose 1-phosphate (at 25 degrees Celsius and pH 7.0)</KM>
        <Vmax evidence="2">8.7 umol/min/mg enzyme with xanthosine as substrate (at 25 degrees Celsius and pH 7.1)</Vmax>
        <Vmax evidence="2">14.2 umol/min/mg enzyme with guanosine as substrate (at 25 degrees Celsius and pH 7.1)</Vmax>
        <Vmax evidence="2">11.9 umol/min/mg enzyme with inosine as substrate (at 25 degrees Celsius and pH 7.1)</Vmax>
    </kinetics>
    <phDependence>
        <text evidence="2 4">Optimum pH is 6.5-7.5 with guanosine as substrate. At pH higher than 7.5, there is a marked reduction in reaction rate and a steep drop at pH higher than 9. Below pH 6.5, there is a dramatic decrease in activity reaching virtually zero at pH 6.0. With xanthosine as substrate, the pH optimum is 5.8-7.2. In the reverse reaction with guanine or xanthine as substrates, the pH optimum is 6.5-8.0. The pH dependence of inosine cleavage does not vary between pH 6 and 8. Maximal activity with inosine as substrate is observed at pH 6.6.</text>
    </phDependence>
    <temperatureDependence>
        <text evidence="2 4">The half-life at 45 degrees Celsius between pH 5 and 8 is 5 to 9 minutes.</text>
    </temperatureDependence>
</comment>
<comment type="pathway">
    <text>Purine metabolism; xanthosine degradation.</text>
</comment>
<comment type="pathway">
    <text>Purine metabolism; purine nucleoside salvage.</text>
</comment>
<comment type="subunit">
    <text evidence="2 6">Hexamer. Dimer of trimers.</text>
</comment>
<comment type="induction">
    <text evidence="1 6 7">By xanthosine and to a lesser extent by deoxyinosine. Full expression requires XapR-xanthosine DNA-binding transcriptional activator.</text>
</comment>
<comment type="disruption phenotype">
    <text evidence="3 7">Does not grow on xanthosine. Slightly increases inosine productivity compared to wild-type (5.6 g/l of inosine versus 4.6 g/l, respectively, from 40 g/l of glucose).</text>
</comment>
<comment type="similarity">
    <text evidence="8">Belongs to the PNP/MTAP phosphorylase family.</text>
</comment>
<comment type="sequence caution" evidence="8">
    <conflict type="frameshift">
        <sequence resource="EMBL-CDS" id="CAA52049"/>
    </conflict>
</comment>
<accession>P45563</accession>
<accession>P77325</accession>
<protein>
    <recommendedName>
        <fullName>Purine nucleoside phosphorylase 2</fullName>
        <ecNumber evidence="1 2 3 4 6 7">2.4.2.1</ecNumber>
    </recommendedName>
    <alternativeName>
        <fullName>Inosine-guanosine phosphorylase</fullName>
    </alternativeName>
    <alternativeName>
        <fullName>Purine nucleoside phosphorylase II</fullName>
        <shortName>PNP II</shortName>
    </alternativeName>
    <alternativeName>
        <fullName>Xanthosine phosphorylase</fullName>
    </alternativeName>
</protein>
<organism>
    <name type="scientific">Escherichia coli (strain K12)</name>
    <dbReference type="NCBI Taxonomy" id="83333"/>
    <lineage>
        <taxon>Bacteria</taxon>
        <taxon>Pseudomonadati</taxon>
        <taxon>Pseudomonadota</taxon>
        <taxon>Gammaproteobacteria</taxon>
        <taxon>Enterobacterales</taxon>
        <taxon>Enterobacteriaceae</taxon>
        <taxon>Escherichia</taxon>
    </lineage>
</organism>
<evidence type="ECO:0000269" key="1">
    <source>
    </source>
</evidence>
<evidence type="ECO:0000269" key="2">
    <source>
    </source>
</evidence>
<evidence type="ECO:0000269" key="3">
    <source>
    </source>
</evidence>
<evidence type="ECO:0000269" key="4">
    <source>
    </source>
</evidence>
<evidence type="ECO:0000269" key="5">
    <source>
    </source>
</evidence>
<evidence type="ECO:0000269" key="6">
    <source>
    </source>
</evidence>
<evidence type="ECO:0000269" key="7">
    <source>
    </source>
</evidence>
<evidence type="ECO:0000305" key="8"/>
<evidence type="ECO:0007744" key="9">
    <source>
        <dbReference type="PDB" id="1YQQ"/>
    </source>
</evidence>
<evidence type="ECO:0007744" key="10">
    <source>
        <dbReference type="PDB" id="1YQU"/>
    </source>
</evidence>
<evidence type="ECO:0007829" key="11">
    <source>
        <dbReference type="PDB" id="1YQQ"/>
    </source>
</evidence>
<keyword id="KW-0002">3D-structure</keyword>
<keyword id="KW-0328">Glycosyltransferase</keyword>
<keyword id="KW-1185">Reference proteome</keyword>
<keyword id="KW-0808">Transferase</keyword>
<reference key="1">
    <citation type="journal article" date="1995" name="J. Bacteriol.">
        <title>Identification and characterization of genes (xapA, xapB, and xapR) involved in xanthosine catabolism in Escherichia coli.</title>
        <authorList>
            <person name="Seeger C."/>
            <person name="Poulsen C."/>
            <person name="Dandanell G."/>
        </authorList>
    </citation>
    <scope>NUCLEOTIDE SEQUENCE [GENOMIC DNA]</scope>
    <scope>CATALYTIC ACTIVITY</scope>
    <scope>INDUCTION</scope>
    <scope>DISRUPTION PHENOTYPE</scope>
    <source>
        <strain>K12</strain>
    </source>
</reference>
<reference key="2">
    <citation type="journal article" date="1997" name="DNA Res.">
        <title>Construction of a contiguous 874-kb sequence of the Escherichia coli-K12 genome corresponding to 50.0-68.8 min on the linkage map and analysis of its sequence features.</title>
        <authorList>
            <person name="Yamamoto Y."/>
            <person name="Aiba H."/>
            <person name="Baba T."/>
            <person name="Hayashi K."/>
            <person name="Inada T."/>
            <person name="Isono K."/>
            <person name="Itoh T."/>
            <person name="Kimura S."/>
            <person name="Kitagawa M."/>
            <person name="Makino K."/>
            <person name="Miki T."/>
            <person name="Mitsuhashi N."/>
            <person name="Mizobuchi K."/>
            <person name="Mori H."/>
            <person name="Nakade S."/>
            <person name="Nakamura Y."/>
            <person name="Nashimoto H."/>
            <person name="Oshima T."/>
            <person name="Oyama S."/>
            <person name="Saito N."/>
            <person name="Sampei G."/>
            <person name="Satoh Y."/>
            <person name="Sivasundaram S."/>
            <person name="Tagami H."/>
            <person name="Takahashi H."/>
            <person name="Takeda J."/>
            <person name="Takemoto K."/>
            <person name="Uehara K."/>
            <person name="Wada C."/>
            <person name="Yamagata S."/>
            <person name="Horiuchi T."/>
        </authorList>
    </citation>
    <scope>NUCLEOTIDE SEQUENCE [LARGE SCALE GENOMIC DNA]</scope>
    <source>
        <strain>K12 / W3110 / ATCC 27325 / DSM 5911</strain>
    </source>
</reference>
<reference key="3">
    <citation type="journal article" date="1997" name="Science">
        <title>The complete genome sequence of Escherichia coli K-12.</title>
        <authorList>
            <person name="Blattner F.R."/>
            <person name="Plunkett G. III"/>
            <person name="Bloch C.A."/>
            <person name="Perna N.T."/>
            <person name="Burland V."/>
            <person name="Riley M."/>
            <person name="Collado-Vides J."/>
            <person name="Glasner J.D."/>
            <person name="Rode C.K."/>
            <person name="Mayhew G.F."/>
            <person name="Gregor J."/>
            <person name="Davis N.W."/>
            <person name="Kirkpatrick H.A."/>
            <person name="Goeden M.A."/>
            <person name="Rose D.J."/>
            <person name="Mau B."/>
            <person name="Shao Y."/>
        </authorList>
    </citation>
    <scope>NUCLEOTIDE SEQUENCE [LARGE SCALE GENOMIC DNA]</scope>
    <source>
        <strain>K12 / MG1655 / ATCC 47076</strain>
    </source>
</reference>
<reference key="4">
    <citation type="journal article" date="2006" name="Mol. Syst. Biol.">
        <title>Highly accurate genome sequences of Escherichia coli K-12 strains MG1655 and W3110.</title>
        <authorList>
            <person name="Hayashi K."/>
            <person name="Morooka N."/>
            <person name="Yamamoto Y."/>
            <person name="Fujita K."/>
            <person name="Isono K."/>
            <person name="Choi S."/>
            <person name="Ohtsubo E."/>
            <person name="Baba T."/>
            <person name="Wanner B.L."/>
            <person name="Mori H."/>
            <person name="Horiuchi T."/>
        </authorList>
    </citation>
    <scope>NUCLEOTIDE SEQUENCE [LARGE SCALE GENOMIC DNA]</scope>
    <source>
        <strain>K12 / W3110 / ATCC 27325 / DSM 5911</strain>
    </source>
</reference>
<reference key="5">
    <citation type="journal article" date="1980" name="Mol. Gen. Genet.">
        <title>A second purine nucleoside phosphorylase in Escherichia coli K-12. I. Xanthosine phosphorylase regulatory mutants isolated as secondary-site revertants of a deoD mutant.</title>
        <authorList>
            <person name="Buxton R.S."/>
            <person name="Hammer-Jespersen K."/>
            <person name="Valentin-Hansen P."/>
        </authorList>
    </citation>
    <scope>FUNCTION</scope>
    <source>
        <strain>K12</strain>
    </source>
</reference>
<reference key="6">
    <citation type="journal article" date="1980" name="Mol. Gen. Genet.">
        <title>A second purine nucleoside phosphorylase in Escherichia coli K-12. II. Properties of xanthosine phosphorylase and its induction by xanthosine.</title>
        <authorList>
            <person name="Hammer-Jespersen K."/>
            <person name="Buxton R.S."/>
            <person name="Hansen T.D."/>
        </authorList>
    </citation>
    <scope>FUNCTION</scope>
    <scope>CATALYTIC ACTIVITY</scope>
    <scope>SUBSTRATE SPECIFICITY</scope>
    <scope>SUBUNIT</scope>
    <scope>INDUCTION</scope>
    <source>
        <strain>K12</strain>
    </source>
</reference>
<reference key="7">
    <citation type="journal article" date="1988" name="J. Bacteriol.">
        <title>Purification and properties of inosine-guanosine phosphorylase from Escherichia coli K-12.</title>
        <authorList>
            <person name="Koszalka G.W."/>
            <person name="Vanhooke J."/>
            <person name="Short S.A."/>
            <person name="Hall W.W."/>
        </authorList>
    </citation>
    <scope>FUNCTION</scope>
    <scope>CATALYTIC ACTIVITY</scope>
    <scope>SUBSTRATE SPECIFICITY</scope>
    <scope>ACTIVITY REGULATION</scope>
    <scope>BIOPHYSICOCHEMICAL PROPERTIES</scope>
    <source>
        <strain>K12</strain>
    </source>
</reference>
<reference key="8">
    <citation type="journal article" date="1999" name="J. Bacteriol.">
        <title>Isolation and characterization of mutations in the Escherichia coli regulatory protein XapR.</title>
        <authorList>
            <person name="Jorgensen C."/>
            <person name="Dandanell G."/>
        </authorList>
    </citation>
    <scope>CATALYTIC ACTIVITY</scope>
    <scope>INDUCTION</scope>
</reference>
<reference key="9">
    <citation type="journal article" date="2006" name="Biosci. Biotechnol. Biochem.">
        <title>Effects of xapA and guaA disruption on inosine accumulation in Escherichia coli.</title>
        <authorList>
            <person name="Shimaoka M."/>
            <person name="Takenaka Y."/>
            <person name="Mihara Y."/>
            <person name="Kurahashi O."/>
            <person name="Kawasaki H."/>
            <person name="Matsui H."/>
        </authorList>
    </citation>
    <scope>CATALYTIC ACTIVITY</scope>
    <scope>DISRUPTION PHENOTYPE</scope>
    <source>
        <strain>K12 / W3110 / ATCC 27325 / DSM 5911</strain>
    </source>
</reference>
<reference key="10">
    <citation type="journal article" date="2005" name="J. Mol. Biol.">
        <title>Escherichia coli purine nucleoside phosphorylase II, the product of the xapA gene.</title>
        <authorList>
            <person name="Dandanell G."/>
            <person name="Szczepanowski R.H."/>
            <person name="Kierdaszuk B."/>
            <person name="Shugar D."/>
            <person name="Bochtler M."/>
        </authorList>
    </citation>
    <scope>X-RAY CRYSTALLOGRAPHY (2.60 ANGSTROMS) IN COMPLEX WITH GUANINE</scope>
    <scope>XANTHINE AND PHOSPHATE</scope>
    <scope>FUNCTION</scope>
    <scope>CATALYTIC ACTIVITY</scope>
    <scope>SUBSTRATE SPECIFICITY</scope>
    <scope>BIOPHYSICOCHEMICAL PROPERTIES</scope>
    <scope>SUBUNIT</scope>
    <scope>MUTAGENESIS OF TYR-191 AND ASN-239</scope>
    <source>
        <strain>K12</strain>
    </source>
</reference>
<sequence length="277" mass="29835">MSQVQFSHNPLFCIDIIKTYKPDFTPRVAFILGSGLGALADQIENAVAISYEKLPGFPVSTVHGHAGELVLGHLQGVPVVCMKGRGHFYEGRGMTIMTDAIRTFKLLGCELLFCTNAAGSLRPEVGAGSLVALKDHINTMPGTPMVGLNDDRFGERFFSLANAYDAEYRALLQKVAKEEGFPLTEGVFVSYPGPNFETAAEIRMMQIIGGDVVGMSVVPEVISARHCDLKVVAVSAITNMAEGLSDVKLSHAQTLAAAELSKQNFINLICGFLRKIA</sequence>